<proteinExistence type="inferred from homology"/>
<reference key="1">
    <citation type="submission" date="2008-01" db="EMBL/GenBank/DDBJ databases">
        <title>Complete sequence of Pseudomonas putida GB-1.</title>
        <authorList>
            <consortium name="US DOE Joint Genome Institute"/>
            <person name="Copeland A."/>
            <person name="Lucas S."/>
            <person name="Lapidus A."/>
            <person name="Barry K."/>
            <person name="Glavina del Rio T."/>
            <person name="Dalin E."/>
            <person name="Tice H."/>
            <person name="Pitluck S."/>
            <person name="Bruce D."/>
            <person name="Goodwin L."/>
            <person name="Chertkov O."/>
            <person name="Brettin T."/>
            <person name="Detter J.C."/>
            <person name="Han C."/>
            <person name="Kuske C.R."/>
            <person name="Schmutz J."/>
            <person name="Larimer F."/>
            <person name="Land M."/>
            <person name="Hauser L."/>
            <person name="Kyrpides N."/>
            <person name="Kim E."/>
            <person name="McCarthy J.K."/>
            <person name="Richardson P."/>
        </authorList>
    </citation>
    <scope>NUCLEOTIDE SEQUENCE [LARGE SCALE GENOMIC DNA]</scope>
    <source>
        <strain>GB-1</strain>
    </source>
</reference>
<sequence length="166" mass="18648">MISDESDRFNPRDPKPADAGKPSKSAKRREARKLATQALYQWHMAQHSLNEIEAQFRVDNDFTDVDGAYFREILHGVPAIKGEIDKALVPCMTIALEELDPVELAVLRLSTWELIKRVDVPYRVVINEGVELAKVFGATDGHKFVNGVLDKLAPALREAEVKANKR</sequence>
<accession>B0KL71</accession>
<evidence type="ECO:0000255" key="1">
    <source>
        <dbReference type="HAMAP-Rule" id="MF_00073"/>
    </source>
</evidence>
<evidence type="ECO:0000256" key="2">
    <source>
        <dbReference type="SAM" id="MobiDB-lite"/>
    </source>
</evidence>
<protein>
    <recommendedName>
        <fullName evidence="1">Transcription antitermination protein NusB</fullName>
    </recommendedName>
    <alternativeName>
        <fullName evidence="1">Antitermination factor NusB</fullName>
    </alternativeName>
</protein>
<keyword id="KW-0694">RNA-binding</keyword>
<keyword id="KW-0804">Transcription</keyword>
<keyword id="KW-0889">Transcription antitermination</keyword>
<keyword id="KW-0805">Transcription regulation</keyword>
<organism>
    <name type="scientific">Pseudomonas putida (strain GB-1)</name>
    <dbReference type="NCBI Taxonomy" id="76869"/>
    <lineage>
        <taxon>Bacteria</taxon>
        <taxon>Pseudomonadati</taxon>
        <taxon>Pseudomonadota</taxon>
        <taxon>Gammaproteobacteria</taxon>
        <taxon>Pseudomonadales</taxon>
        <taxon>Pseudomonadaceae</taxon>
        <taxon>Pseudomonas</taxon>
    </lineage>
</organism>
<dbReference type="EMBL" id="CP000926">
    <property type="protein sequence ID" value="ABY96475.1"/>
    <property type="molecule type" value="Genomic_DNA"/>
</dbReference>
<dbReference type="RefSeq" id="WP_003255393.1">
    <property type="nucleotide sequence ID" value="NC_010322.1"/>
</dbReference>
<dbReference type="SMR" id="B0KL71"/>
<dbReference type="GeneID" id="83677818"/>
<dbReference type="KEGG" id="ppg:PputGB1_0564"/>
<dbReference type="eggNOG" id="COG0781">
    <property type="taxonomic scope" value="Bacteria"/>
</dbReference>
<dbReference type="HOGENOM" id="CLU_087843_4_1_6"/>
<dbReference type="Proteomes" id="UP000002157">
    <property type="component" value="Chromosome"/>
</dbReference>
<dbReference type="GO" id="GO:0005829">
    <property type="term" value="C:cytosol"/>
    <property type="evidence" value="ECO:0007669"/>
    <property type="project" value="TreeGrafter"/>
</dbReference>
<dbReference type="GO" id="GO:0003723">
    <property type="term" value="F:RNA binding"/>
    <property type="evidence" value="ECO:0007669"/>
    <property type="project" value="UniProtKB-UniRule"/>
</dbReference>
<dbReference type="GO" id="GO:0006353">
    <property type="term" value="P:DNA-templated transcription termination"/>
    <property type="evidence" value="ECO:0007669"/>
    <property type="project" value="UniProtKB-UniRule"/>
</dbReference>
<dbReference type="GO" id="GO:0031564">
    <property type="term" value="P:transcription antitermination"/>
    <property type="evidence" value="ECO:0007669"/>
    <property type="project" value="UniProtKB-KW"/>
</dbReference>
<dbReference type="Gene3D" id="1.10.940.10">
    <property type="entry name" value="NusB-like"/>
    <property type="match status" value="1"/>
</dbReference>
<dbReference type="HAMAP" id="MF_00073">
    <property type="entry name" value="NusB"/>
    <property type="match status" value="1"/>
</dbReference>
<dbReference type="InterPro" id="IPR035926">
    <property type="entry name" value="NusB-like_sf"/>
</dbReference>
<dbReference type="InterPro" id="IPR011605">
    <property type="entry name" value="NusB_fam"/>
</dbReference>
<dbReference type="InterPro" id="IPR006027">
    <property type="entry name" value="NusB_RsmB_TIM44"/>
</dbReference>
<dbReference type="NCBIfam" id="TIGR01951">
    <property type="entry name" value="nusB"/>
    <property type="match status" value="1"/>
</dbReference>
<dbReference type="PANTHER" id="PTHR11078:SF3">
    <property type="entry name" value="ANTITERMINATION NUSB DOMAIN-CONTAINING PROTEIN"/>
    <property type="match status" value="1"/>
</dbReference>
<dbReference type="PANTHER" id="PTHR11078">
    <property type="entry name" value="N UTILIZATION SUBSTANCE PROTEIN B-RELATED"/>
    <property type="match status" value="1"/>
</dbReference>
<dbReference type="Pfam" id="PF01029">
    <property type="entry name" value="NusB"/>
    <property type="match status" value="1"/>
</dbReference>
<dbReference type="SUPFAM" id="SSF48013">
    <property type="entry name" value="NusB-like"/>
    <property type="match status" value="1"/>
</dbReference>
<feature type="chain" id="PRO_1000075196" description="Transcription antitermination protein NusB">
    <location>
        <begin position="1"/>
        <end position="166"/>
    </location>
</feature>
<feature type="region of interest" description="Disordered" evidence="2">
    <location>
        <begin position="1"/>
        <end position="28"/>
    </location>
</feature>
<feature type="compositionally biased region" description="Basic and acidic residues" evidence="2">
    <location>
        <begin position="1"/>
        <end position="18"/>
    </location>
</feature>
<name>NUSB_PSEPG</name>
<gene>
    <name evidence="1" type="primary">nusB</name>
    <name type="ordered locus">PputGB1_0564</name>
</gene>
<comment type="function">
    <text evidence="1">Involved in transcription antitermination. Required for transcription of ribosomal RNA (rRNA) genes. Binds specifically to the boxA antiterminator sequence of the ribosomal RNA (rrn) operons.</text>
</comment>
<comment type="similarity">
    <text evidence="1">Belongs to the NusB family.</text>
</comment>